<protein>
    <recommendedName>
        <fullName evidence="5">Superantigen-like protein 11</fullName>
    </recommendedName>
</protein>
<accession>A8E1U5</accession>
<reference key="1">
    <citation type="journal article" date="2007" name="Mol. Microbiol.">
        <title>The crystal structure of staphylococcal superantigen-like protein 11 in complex with sialyl Lewis X reveals the mechanism for cell binding and immune inhibition.</title>
        <authorList>
            <person name="Chung M.C."/>
            <person name="Wines B.D."/>
            <person name="Baker H."/>
            <person name="Langley R.J."/>
            <person name="Baker E.N."/>
            <person name="Fraser J.D."/>
        </authorList>
    </citation>
    <scope>NUCLEOTIDE SEQUENCE [GENOMIC DNA]</scope>
    <scope>X-RAY CRYSTALLOGRAPHY (1.7 ANGSTROMS) OF 1-196</scope>
    <scope>SUBUNIT</scope>
    <scope>INTERACTION WITH HOST SELPLG AND FCAR</scope>
    <scope>MUTAGENESIS OF THR-168</scope>
    <source>
        <strain>US6610</strain>
    </source>
</reference>
<reference key="2">
    <citation type="journal article" date="2019" name="Sci. Rep.">
        <title>Staphylococcal Superantigen-like protein 11 mediates neutrophil adhesion and motility arrest, a unique bacterial toxin action.</title>
        <authorList>
            <person name="Chen C."/>
            <person name="Yang C."/>
            <person name="Barbieri J.T."/>
        </authorList>
    </citation>
    <scope>FUNCTION</scope>
    <source>
        <strain>USA300_FPR3757</strain>
    </source>
</reference>
<sequence length="196" mass="22651">STLEVRSQATQDLSEYYNRPYFDLRNLSGYREGNTVTFINHYQQTDVKLEGKDKDKIKDGNNENLDVFVVREGSGRQADNNSIGGITKTNRTQHIDTVQNVNLLVSKSTGQHTTSVTSTNYSIYKEEISLKELDFKLRKHLIDKHDLYKTEPKDSKIRVTMKNGDFYTFELNKKLQTHRMGDVIDGRNIEKIEVNL</sequence>
<organism>
    <name type="scientific">Staphylococcus aureus</name>
    <dbReference type="NCBI Taxonomy" id="1280"/>
    <lineage>
        <taxon>Bacteria</taxon>
        <taxon>Bacillati</taxon>
        <taxon>Bacillota</taxon>
        <taxon>Bacilli</taxon>
        <taxon>Bacillales</taxon>
        <taxon>Staphylococcaceae</taxon>
        <taxon>Staphylococcus</taxon>
    </lineage>
</organism>
<keyword id="KW-0002">3D-structure</keyword>
<keyword id="KW-0964">Secreted</keyword>
<keyword id="KW-0843">Virulence</keyword>
<evidence type="ECO:0000250" key="1">
    <source>
        <dbReference type="UniProtKB" id="Q2G0X7"/>
    </source>
</evidence>
<evidence type="ECO:0000250" key="2">
    <source>
        <dbReference type="UniProtKB" id="Q2G1S8"/>
    </source>
</evidence>
<evidence type="ECO:0000269" key="3">
    <source>
    </source>
</evidence>
<evidence type="ECO:0000269" key="4">
    <source>
    </source>
</evidence>
<evidence type="ECO:0000303" key="5">
    <source>
    </source>
</evidence>
<evidence type="ECO:0000305" key="6"/>
<evidence type="ECO:0007829" key="7">
    <source>
        <dbReference type="PDB" id="2RDG"/>
    </source>
</evidence>
<gene>
    <name evidence="5" type="primary">sl11</name>
</gene>
<name>SLL11_STAAU</name>
<proteinExistence type="evidence at protein level"/>
<comment type="function">
    <text evidence="3 4">Secreted protein that plays a role in the inhibition of host immune system. Targets myeloid cells such as monocytes or granulocytes through binding with sialyllactosamine-containing glycoproteins (PubMed:18045383). Prevents initial rolling of neutrophils toward the site of infection by interacting with host SELPLG (PubMed:18045383). Disrupts neutrophil motility by induction of cell adhesion via interacting with glycans but independently of SELPLG (PubMed:30862940).</text>
</comment>
<comment type="subunit">
    <text evidence="3">Homodimer (via its C-terminal domain) (PubMed:18045383). Interacts with host FCAR and SELPLG (via sialyl Lewis X) (PubMed:18045383).</text>
</comment>
<comment type="subcellular location">
    <subcellularLocation>
        <location evidence="2">Secreted</location>
    </subcellularLocation>
</comment>
<comment type="domain">
    <text evidence="1">The C-terminal domain contains a V-shape binding site for sialyl Lewis X.</text>
</comment>
<comment type="similarity">
    <text evidence="6">Belongs to the staphylococcal/streptococcal toxin family.</text>
</comment>
<dbReference type="EMBL" id="AM887868">
    <property type="protein sequence ID" value="CAP09054.1"/>
    <property type="molecule type" value="Genomic_DNA"/>
</dbReference>
<dbReference type="PDB" id="2RDG">
    <property type="method" value="X-ray"/>
    <property type="resolution" value="1.60 A"/>
    <property type="chains" value="A=1-196"/>
</dbReference>
<dbReference type="PDB" id="2RDH">
    <property type="method" value="X-ray"/>
    <property type="resolution" value="1.70 A"/>
    <property type="chains" value="A/B/C/D=1-196"/>
</dbReference>
<dbReference type="PDBsum" id="2RDG"/>
<dbReference type="PDBsum" id="2RDH"/>
<dbReference type="SMR" id="A8E1U5"/>
<dbReference type="UniLectin" id="A8E1U5"/>
<dbReference type="EvolutionaryTrace" id="A8E1U5"/>
<dbReference type="GO" id="GO:0005576">
    <property type="term" value="C:extracellular region"/>
    <property type="evidence" value="ECO:0007669"/>
    <property type="project" value="UniProtKB-SubCell"/>
</dbReference>
<dbReference type="Gene3D" id="2.40.50.110">
    <property type="match status" value="1"/>
</dbReference>
<dbReference type="Gene3D" id="3.10.20.120">
    <property type="match status" value="1"/>
</dbReference>
<dbReference type="InterPro" id="IPR008992">
    <property type="entry name" value="Enterotoxin"/>
</dbReference>
<dbReference type="InterPro" id="IPR015282">
    <property type="entry name" value="SSL_OB"/>
</dbReference>
<dbReference type="InterPro" id="IPR006126">
    <property type="entry name" value="Staph/Strept_toxin_CS"/>
</dbReference>
<dbReference type="InterPro" id="IPR008375">
    <property type="entry name" value="Staph_exotoxin"/>
</dbReference>
<dbReference type="InterPro" id="IPR016091">
    <property type="entry name" value="SuperAg_toxin_C"/>
</dbReference>
<dbReference type="InterPro" id="IPR013307">
    <property type="entry name" value="Superantigen_bac"/>
</dbReference>
<dbReference type="InterPro" id="IPR006123">
    <property type="entry name" value="Toxin_b-grasp_Staph/Strep"/>
</dbReference>
<dbReference type="Pfam" id="PF09199">
    <property type="entry name" value="SSL_OB"/>
    <property type="match status" value="1"/>
</dbReference>
<dbReference type="Pfam" id="PF02876">
    <property type="entry name" value="Stap_Strp_tox_C"/>
    <property type="match status" value="1"/>
</dbReference>
<dbReference type="PRINTS" id="PR01898">
    <property type="entry name" value="SAGSUPRFAMLY"/>
</dbReference>
<dbReference type="PRINTS" id="PR01800">
    <property type="entry name" value="STAPHEXOTOXN"/>
</dbReference>
<dbReference type="SUPFAM" id="SSF50203">
    <property type="entry name" value="Bacterial enterotoxins"/>
    <property type="match status" value="1"/>
</dbReference>
<dbReference type="SUPFAM" id="SSF54334">
    <property type="entry name" value="Superantigen toxins, C-terminal domain"/>
    <property type="match status" value="1"/>
</dbReference>
<dbReference type="PROSITE" id="PS00278">
    <property type="entry name" value="STAPH_STREP_TOXIN_2"/>
    <property type="match status" value="1"/>
</dbReference>
<feature type="chain" id="PRO_0000447510" description="Superantigen-like protein 11">
    <location>
        <begin position="1" status="less than"/>
        <end position="196"/>
    </location>
</feature>
<feature type="region of interest" description="Sialyl Lewis X-binding" evidence="1">
    <location>
        <begin position="65"/>
        <end position="167"/>
    </location>
</feature>
<feature type="mutagenesis site" description="Complete loss of carbohydrate binding." evidence="3">
    <original>T</original>
    <variation>P</variation>
    <location>
        <position position="168"/>
    </location>
</feature>
<feature type="non-terminal residue">
    <location>
        <position position="1"/>
    </location>
</feature>
<feature type="helix" evidence="7">
    <location>
        <begin position="8"/>
        <end position="17"/>
    </location>
</feature>
<feature type="strand" evidence="7">
    <location>
        <begin position="21"/>
        <end position="32"/>
    </location>
</feature>
<feature type="strand" evidence="7">
    <location>
        <begin position="35"/>
        <end position="40"/>
    </location>
</feature>
<feature type="strand" evidence="7">
    <location>
        <begin position="43"/>
        <end position="48"/>
    </location>
</feature>
<feature type="helix" evidence="7">
    <location>
        <begin position="53"/>
        <end position="56"/>
    </location>
</feature>
<feature type="strand" evidence="7">
    <location>
        <begin position="59"/>
        <end position="70"/>
    </location>
</feature>
<feature type="strand" evidence="7">
    <location>
        <begin position="72"/>
        <end position="77"/>
    </location>
</feature>
<feature type="helix" evidence="7">
    <location>
        <begin position="78"/>
        <end position="80"/>
    </location>
</feature>
<feature type="strand" evidence="7">
    <location>
        <begin position="81"/>
        <end position="83"/>
    </location>
</feature>
<feature type="strand" evidence="7">
    <location>
        <begin position="86"/>
        <end position="88"/>
    </location>
</feature>
<feature type="strand" evidence="7">
    <location>
        <begin position="98"/>
        <end position="108"/>
    </location>
</feature>
<feature type="strand" evidence="7">
    <location>
        <begin position="110"/>
        <end position="112"/>
    </location>
</feature>
<feature type="strand" evidence="7">
    <location>
        <begin position="114"/>
        <end position="123"/>
    </location>
</feature>
<feature type="strand" evidence="7">
    <location>
        <begin position="126"/>
        <end position="129"/>
    </location>
</feature>
<feature type="helix" evidence="7">
    <location>
        <begin position="130"/>
        <end position="144"/>
    </location>
</feature>
<feature type="strand" evidence="7">
    <location>
        <begin position="156"/>
        <end position="161"/>
    </location>
</feature>
<feature type="strand" evidence="7">
    <location>
        <begin position="166"/>
        <end position="170"/>
    </location>
</feature>
<feature type="helix" evidence="7">
    <location>
        <begin position="177"/>
        <end position="179"/>
    </location>
</feature>
<feature type="strand" evidence="7">
    <location>
        <begin position="183"/>
        <end position="185"/>
    </location>
</feature>
<feature type="helix" evidence="7">
    <location>
        <begin position="186"/>
        <end position="188"/>
    </location>
</feature>
<feature type="strand" evidence="7">
    <location>
        <begin position="189"/>
        <end position="195"/>
    </location>
</feature>